<keyword id="KW-0963">Cytoplasm</keyword>
<keyword id="KW-0687">Ribonucleoprotein</keyword>
<keyword id="KW-0694">RNA-binding</keyword>
<keyword id="KW-0733">Signal recognition particle</keyword>
<dbReference type="EMBL" id="AJ248284">
    <property type="protein sequence ID" value="CAB49350.1"/>
    <property type="molecule type" value="Genomic_DNA"/>
</dbReference>
<dbReference type="EMBL" id="HE613800">
    <property type="protein sequence ID" value="CCE69809.1"/>
    <property type="molecule type" value="Genomic_DNA"/>
</dbReference>
<dbReference type="PIR" id="G75158">
    <property type="entry name" value="G75158"/>
</dbReference>
<dbReference type="RefSeq" id="WP_048146554.1">
    <property type="nucleotide sequence ID" value="NC_000868.1"/>
</dbReference>
<dbReference type="SMR" id="Q9V1J9"/>
<dbReference type="STRING" id="272844.PAB2061"/>
<dbReference type="KEGG" id="pab:PAB2061"/>
<dbReference type="PATRIC" id="fig|272844.11.peg.450"/>
<dbReference type="eggNOG" id="arCOG01217">
    <property type="taxonomic scope" value="Archaea"/>
</dbReference>
<dbReference type="HOGENOM" id="CLU_169299_1_0_2"/>
<dbReference type="OrthoDB" id="56356at2157"/>
<dbReference type="PhylomeDB" id="Q9V1J9"/>
<dbReference type="Proteomes" id="UP000000810">
    <property type="component" value="Chromosome"/>
</dbReference>
<dbReference type="Proteomes" id="UP000009139">
    <property type="component" value="Chromosome"/>
</dbReference>
<dbReference type="GO" id="GO:0048500">
    <property type="term" value="C:signal recognition particle"/>
    <property type="evidence" value="ECO:0007669"/>
    <property type="project" value="UniProtKB-UniRule"/>
</dbReference>
<dbReference type="GO" id="GO:0008312">
    <property type="term" value="F:7S RNA binding"/>
    <property type="evidence" value="ECO:0007669"/>
    <property type="project" value="UniProtKB-UniRule"/>
</dbReference>
<dbReference type="GO" id="GO:0006614">
    <property type="term" value="P:SRP-dependent cotranslational protein targeting to membrane"/>
    <property type="evidence" value="ECO:0007669"/>
    <property type="project" value="InterPro"/>
</dbReference>
<dbReference type="Gene3D" id="3.30.56.30">
    <property type="entry name" value="Signal recognition particle, SRP19-like subunit"/>
    <property type="match status" value="1"/>
</dbReference>
<dbReference type="HAMAP" id="MF_00305">
    <property type="entry name" value="SRP19"/>
    <property type="match status" value="1"/>
</dbReference>
<dbReference type="InterPro" id="IPR002778">
    <property type="entry name" value="Signal_recog_particle_SRP19"/>
</dbReference>
<dbReference type="InterPro" id="IPR036521">
    <property type="entry name" value="SRP19-like_sf"/>
</dbReference>
<dbReference type="InterPro" id="IPR022938">
    <property type="entry name" value="SRP19_arc-type"/>
</dbReference>
<dbReference type="NCBIfam" id="NF002993">
    <property type="entry name" value="PRK03745.1"/>
    <property type="match status" value="1"/>
</dbReference>
<dbReference type="Pfam" id="PF01922">
    <property type="entry name" value="SRP19"/>
    <property type="match status" value="1"/>
</dbReference>
<dbReference type="SUPFAM" id="SSF69695">
    <property type="entry name" value="SRP19"/>
    <property type="match status" value="1"/>
</dbReference>
<sequence length="99" mass="11541">MSKFVIWTSELDSRLSKKYGRVVPRNLAVERPSIEEIEEAAKSLGFKVLQVEREKLNPKLSGIDEDLRTYGRIIIESPYGKAKTLKIIAQKIRELRRRR</sequence>
<organism>
    <name type="scientific">Pyrococcus abyssi (strain GE5 / Orsay)</name>
    <dbReference type="NCBI Taxonomy" id="272844"/>
    <lineage>
        <taxon>Archaea</taxon>
        <taxon>Methanobacteriati</taxon>
        <taxon>Methanobacteriota</taxon>
        <taxon>Thermococci</taxon>
        <taxon>Thermococcales</taxon>
        <taxon>Thermococcaceae</taxon>
        <taxon>Pyrococcus</taxon>
    </lineage>
</organism>
<proteinExistence type="inferred from homology"/>
<protein>
    <recommendedName>
        <fullName evidence="1">Signal recognition particle 19 kDa protein</fullName>
        <shortName evidence="1">SRP19</shortName>
    </recommendedName>
</protein>
<name>SRP19_PYRAB</name>
<evidence type="ECO:0000255" key="1">
    <source>
        <dbReference type="HAMAP-Rule" id="MF_00305"/>
    </source>
</evidence>
<gene>
    <name evidence="1" type="primary">srp19</name>
    <name type="ordered locus">PYRAB04280</name>
    <name type="ORF">PAB2061</name>
</gene>
<reference key="1">
    <citation type="journal article" date="2003" name="Mol. Microbiol.">
        <title>An integrated analysis of the genome of the hyperthermophilic archaeon Pyrococcus abyssi.</title>
        <authorList>
            <person name="Cohen G.N."/>
            <person name="Barbe V."/>
            <person name="Flament D."/>
            <person name="Galperin M."/>
            <person name="Heilig R."/>
            <person name="Lecompte O."/>
            <person name="Poch O."/>
            <person name="Prieur D."/>
            <person name="Querellou J."/>
            <person name="Ripp R."/>
            <person name="Thierry J.-C."/>
            <person name="Van der Oost J."/>
            <person name="Weissenbach J."/>
            <person name="Zivanovic Y."/>
            <person name="Forterre P."/>
        </authorList>
    </citation>
    <scope>NUCLEOTIDE SEQUENCE [LARGE SCALE GENOMIC DNA]</scope>
    <source>
        <strain>GE5 / Orsay</strain>
    </source>
</reference>
<reference key="2">
    <citation type="journal article" date="2012" name="Curr. Microbiol.">
        <title>Re-annotation of two hyperthermophilic archaea Pyrococcus abyssi GE5 and Pyrococcus furiosus DSM 3638.</title>
        <authorList>
            <person name="Gao J."/>
            <person name="Wang J."/>
        </authorList>
    </citation>
    <scope>GENOME REANNOTATION</scope>
    <source>
        <strain>GE5 / Orsay</strain>
    </source>
</reference>
<comment type="function">
    <text evidence="1">Involved in targeting and insertion of nascent membrane proteins into the cytoplasmic membrane. Binds directly to 7S RNA and mediates binding of the 54 kDa subunit of the SRP.</text>
</comment>
<comment type="subunit">
    <text evidence="1">Part of the signal recognition particle protein translocation system, which is composed of SRP and FtsY. Archaeal SRP consists of a 7S RNA molecule of 300 nucleotides and two protein subunits: SRP54 and SRP19.</text>
</comment>
<comment type="subcellular location">
    <subcellularLocation>
        <location evidence="1">Cytoplasm</location>
    </subcellularLocation>
</comment>
<comment type="similarity">
    <text evidence="1">Belongs to the SRP19 family.</text>
</comment>
<accession>Q9V1J9</accession>
<accession>G8ZGD0</accession>
<feature type="chain" id="PRO_0000135221" description="Signal recognition particle 19 kDa protein">
    <location>
        <begin position="1"/>
        <end position="99"/>
    </location>
</feature>